<protein>
    <recommendedName>
        <fullName evidence="1">Multidrug resistance protein MdtK</fullName>
    </recommendedName>
    <alternativeName>
        <fullName evidence="1">Multidrug-efflux transporter</fullName>
    </alternativeName>
</protein>
<accession>B7US04</accession>
<proteinExistence type="inferred from homology"/>
<keyword id="KW-0050">Antiport</keyword>
<keyword id="KW-0997">Cell inner membrane</keyword>
<keyword id="KW-1003">Cell membrane</keyword>
<keyword id="KW-0406">Ion transport</keyword>
<keyword id="KW-0472">Membrane</keyword>
<keyword id="KW-1185">Reference proteome</keyword>
<keyword id="KW-0915">Sodium</keyword>
<keyword id="KW-0739">Sodium transport</keyword>
<keyword id="KW-0812">Transmembrane</keyword>
<keyword id="KW-1133">Transmembrane helix</keyword>
<keyword id="KW-0813">Transport</keyword>
<gene>
    <name evidence="1" type="primary">mdtK</name>
    <name type="ordered locus">E2348C_1750</name>
</gene>
<reference key="1">
    <citation type="journal article" date="2009" name="J. Bacteriol.">
        <title>Complete genome sequence and comparative genome analysis of enteropathogenic Escherichia coli O127:H6 strain E2348/69.</title>
        <authorList>
            <person name="Iguchi A."/>
            <person name="Thomson N.R."/>
            <person name="Ogura Y."/>
            <person name="Saunders D."/>
            <person name="Ooka T."/>
            <person name="Henderson I.R."/>
            <person name="Harris D."/>
            <person name="Asadulghani M."/>
            <person name="Kurokawa K."/>
            <person name="Dean P."/>
            <person name="Kenny B."/>
            <person name="Quail M.A."/>
            <person name="Thurston S."/>
            <person name="Dougan G."/>
            <person name="Hayashi T."/>
            <person name="Parkhill J."/>
            <person name="Frankel G."/>
        </authorList>
    </citation>
    <scope>NUCLEOTIDE SEQUENCE [LARGE SCALE GENOMIC DNA]</scope>
    <source>
        <strain>E2348/69 / EPEC</strain>
    </source>
</reference>
<dbReference type="EMBL" id="FM180568">
    <property type="protein sequence ID" value="CAS09298.1"/>
    <property type="molecule type" value="Genomic_DNA"/>
</dbReference>
<dbReference type="RefSeq" id="WP_001174940.1">
    <property type="nucleotide sequence ID" value="NC_011601.1"/>
</dbReference>
<dbReference type="SMR" id="B7US04"/>
<dbReference type="KEGG" id="ecg:E2348C_1750"/>
<dbReference type="HOGENOM" id="CLU_012893_6_0_6"/>
<dbReference type="Proteomes" id="UP000008205">
    <property type="component" value="Chromosome"/>
</dbReference>
<dbReference type="GO" id="GO:0005886">
    <property type="term" value="C:plasma membrane"/>
    <property type="evidence" value="ECO:0007669"/>
    <property type="project" value="UniProtKB-SubCell"/>
</dbReference>
<dbReference type="GO" id="GO:0015297">
    <property type="term" value="F:antiporter activity"/>
    <property type="evidence" value="ECO:0007669"/>
    <property type="project" value="UniProtKB-UniRule"/>
</dbReference>
<dbReference type="GO" id="GO:0042910">
    <property type="term" value="F:xenobiotic transmembrane transporter activity"/>
    <property type="evidence" value="ECO:0007669"/>
    <property type="project" value="UniProtKB-UniRule"/>
</dbReference>
<dbReference type="GO" id="GO:0006814">
    <property type="term" value="P:sodium ion transport"/>
    <property type="evidence" value="ECO:0007669"/>
    <property type="project" value="UniProtKB-UniRule"/>
</dbReference>
<dbReference type="GO" id="GO:0006855">
    <property type="term" value="P:xenobiotic transmembrane transport"/>
    <property type="evidence" value="ECO:0007669"/>
    <property type="project" value="UniProtKB-UniRule"/>
</dbReference>
<dbReference type="CDD" id="cd13131">
    <property type="entry name" value="MATE_NorM_like"/>
    <property type="match status" value="1"/>
</dbReference>
<dbReference type="HAMAP" id="MF_00400">
    <property type="entry name" value="MdtK"/>
    <property type="match status" value="1"/>
</dbReference>
<dbReference type="InterPro" id="IPR002528">
    <property type="entry name" value="MATE_fam"/>
</dbReference>
<dbReference type="InterPro" id="IPR050222">
    <property type="entry name" value="MATE_MdtK"/>
</dbReference>
<dbReference type="InterPro" id="IPR048279">
    <property type="entry name" value="MdtK-like"/>
</dbReference>
<dbReference type="InterPro" id="IPR022913">
    <property type="entry name" value="Multidrug-R_MdtK"/>
</dbReference>
<dbReference type="NCBIfam" id="TIGR00797">
    <property type="entry name" value="matE"/>
    <property type="match status" value="1"/>
</dbReference>
<dbReference type="PANTHER" id="PTHR43298:SF2">
    <property type="entry name" value="FMN_FAD EXPORTER YEEO-RELATED"/>
    <property type="match status" value="1"/>
</dbReference>
<dbReference type="PANTHER" id="PTHR43298">
    <property type="entry name" value="MULTIDRUG RESISTANCE PROTEIN NORM-RELATED"/>
    <property type="match status" value="1"/>
</dbReference>
<dbReference type="Pfam" id="PF01554">
    <property type="entry name" value="MatE"/>
    <property type="match status" value="2"/>
</dbReference>
<dbReference type="PIRSF" id="PIRSF006603">
    <property type="entry name" value="DinF"/>
    <property type="match status" value="1"/>
</dbReference>
<comment type="function">
    <text evidence="1">Multidrug efflux pump that functions probably as a Na(+)/drug antiporter.</text>
</comment>
<comment type="subcellular location">
    <subcellularLocation>
        <location evidence="1">Cell inner membrane</location>
        <topology evidence="1">Multi-pass membrane protein</topology>
    </subcellularLocation>
</comment>
<comment type="similarity">
    <text evidence="1">Belongs to the multi antimicrobial extrusion (MATE) (TC 2.A.66.1) family. MdtK subfamily.</text>
</comment>
<sequence>MQKYISEARLLLALAIPVILAQIAQTAMGFVDTVMAGGYSATDMAAVAIGTSIWLPAILFGHGLLLALTPVIAQLNGSGRRERIAHQVRQGFWLAGFVSVLIMLVLWNAGYIIRSMENIDPALADKAVGYLRALLWGAPGYLFFQVARNQCEGLAKTKPGMVMGFIGLLVNIPVNYIFIYGHFGMPELGGVGCGVATAAVYWVMFLAMVSYIKRARSMRDIRNEKGTAKPDPAVMKRLIQLGLPIALALFFEVTLFAVVALLVSPLGIVDVAGHQIALNFSSLMFVLPMSLAAAVTIRVGYRLGQGSTLDAQTAARTGLMVGVCMATLTAIFTVSLREQIALLYNDNPEVVTLAAHLMLLAAVYQISDSIQVIGSGILRGYKDTRSIFYITFTAYWVLGLPSGYILALTDLVVEPMGPAGFWIGFIIGLTSAAIMMMLRMRFLQRLPSAIILQRASR</sequence>
<evidence type="ECO:0000255" key="1">
    <source>
        <dbReference type="HAMAP-Rule" id="MF_00400"/>
    </source>
</evidence>
<feature type="chain" id="PRO_1000134543" description="Multidrug resistance protein MdtK">
    <location>
        <begin position="1"/>
        <end position="457"/>
    </location>
</feature>
<feature type="transmembrane region" description="Helical" evidence="1">
    <location>
        <begin position="11"/>
        <end position="31"/>
    </location>
</feature>
<feature type="transmembrane region" description="Helical" evidence="1">
    <location>
        <begin position="53"/>
        <end position="73"/>
    </location>
</feature>
<feature type="transmembrane region" description="Helical" evidence="1">
    <location>
        <begin position="93"/>
        <end position="113"/>
    </location>
</feature>
<feature type="transmembrane region" description="Helical" evidence="1">
    <location>
        <begin position="127"/>
        <end position="147"/>
    </location>
</feature>
<feature type="transmembrane region" description="Helical" evidence="1">
    <location>
        <begin position="160"/>
        <end position="180"/>
    </location>
</feature>
<feature type="transmembrane region" description="Helical" evidence="1">
    <location>
        <begin position="189"/>
        <end position="209"/>
    </location>
</feature>
<feature type="transmembrane region" description="Helical" evidence="1">
    <location>
        <begin position="243"/>
        <end position="263"/>
    </location>
</feature>
<feature type="transmembrane region" description="Helical" evidence="1">
    <location>
        <begin position="276"/>
        <end position="296"/>
    </location>
</feature>
<feature type="transmembrane region" description="Helical" evidence="1">
    <location>
        <begin position="314"/>
        <end position="334"/>
    </location>
</feature>
<feature type="transmembrane region" description="Helical" evidence="1">
    <location>
        <begin position="350"/>
        <end position="370"/>
    </location>
</feature>
<feature type="transmembrane region" description="Helical" evidence="1">
    <location>
        <begin position="387"/>
        <end position="407"/>
    </location>
</feature>
<feature type="transmembrane region" description="Helical" evidence="1">
    <location>
        <begin position="418"/>
        <end position="438"/>
    </location>
</feature>
<organism>
    <name type="scientific">Escherichia coli O127:H6 (strain E2348/69 / EPEC)</name>
    <dbReference type="NCBI Taxonomy" id="574521"/>
    <lineage>
        <taxon>Bacteria</taxon>
        <taxon>Pseudomonadati</taxon>
        <taxon>Pseudomonadota</taxon>
        <taxon>Gammaproteobacteria</taxon>
        <taxon>Enterobacterales</taxon>
        <taxon>Enterobacteriaceae</taxon>
        <taxon>Escherichia</taxon>
    </lineage>
</organism>
<name>MDTK_ECO27</name>